<sequence>MSLGLVGRKVGMTRIFTAEGDSIPVTVLDVSDNRVTQIKTVETDGYTAVQVAFGTRRASRVTKPLAGHLAKAGVQAGEILKEFQIDAAKAAELSSGAVIGVDLFEVGQKVDVQGTSIGKGYAGTIKRYNFSSGRASHGNSRSHNVPGSIGMAQDPGRVFPGKRMTGHMGDETVTVQNLEIARIDADRKLLLVKGAVPGAKGGKVFVTPAVKTRAVKGAK</sequence>
<reference key="1">
    <citation type="journal article" date="2014" name="Stand. Genomic Sci.">
        <title>Complete genome sequence of Burkholderia phymatum STM815(T), a broad host range and efficient nitrogen-fixing symbiont of Mimosa species.</title>
        <authorList>
            <person name="Moulin L."/>
            <person name="Klonowska A."/>
            <person name="Caroline B."/>
            <person name="Booth K."/>
            <person name="Vriezen J.A."/>
            <person name="Melkonian R."/>
            <person name="James E.K."/>
            <person name="Young J.P."/>
            <person name="Bena G."/>
            <person name="Hauser L."/>
            <person name="Land M."/>
            <person name="Kyrpides N."/>
            <person name="Bruce D."/>
            <person name="Chain P."/>
            <person name="Copeland A."/>
            <person name="Pitluck S."/>
            <person name="Woyke T."/>
            <person name="Lizotte-Waniewski M."/>
            <person name="Bristow J."/>
            <person name="Riley M."/>
        </authorList>
    </citation>
    <scope>NUCLEOTIDE SEQUENCE [LARGE SCALE GENOMIC DNA]</scope>
    <source>
        <strain>DSM 17167 / CIP 108236 / LMG 21445 / STM815</strain>
    </source>
</reference>
<keyword id="KW-0488">Methylation</keyword>
<keyword id="KW-1185">Reference proteome</keyword>
<keyword id="KW-0687">Ribonucleoprotein</keyword>
<keyword id="KW-0689">Ribosomal protein</keyword>
<keyword id="KW-0694">RNA-binding</keyword>
<keyword id="KW-0699">rRNA-binding</keyword>
<accession>B2JIG6</accession>
<name>RL3_PARP8</name>
<gene>
    <name evidence="1" type="primary">rplC</name>
    <name type="ordered locus">Bphy_2840</name>
</gene>
<comment type="function">
    <text evidence="1">One of the primary rRNA binding proteins, it binds directly near the 3'-end of the 23S rRNA, where it nucleates assembly of the 50S subunit.</text>
</comment>
<comment type="subunit">
    <text evidence="1">Part of the 50S ribosomal subunit. Forms a cluster with proteins L14 and L19.</text>
</comment>
<comment type="PTM">
    <text evidence="1">Methylated by PrmB.</text>
</comment>
<comment type="similarity">
    <text evidence="1">Belongs to the universal ribosomal protein uL3 family.</text>
</comment>
<protein>
    <recommendedName>
        <fullName evidence="1">Large ribosomal subunit protein uL3</fullName>
    </recommendedName>
    <alternativeName>
        <fullName evidence="3">50S ribosomal protein L3</fullName>
    </alternativeName>
</protein>
<organism>
    <name type="scientific">Paraburkholderia phymatum (strain DSM 17167 / CIP 108236 / LMG 21445 / STM815)</name>
    <name type="common">Burkholderia phymatum</name>
    <dbReference type="NCBI Taxonomy" id="391038"/>
    <lineage>
        <taxon>Bacteria</taxon>
        <taxon>Pseudomonadati</taxon>
        <taxon>Pseudomonadota</taxon>
        <taxon>Betaproteobacteria</taxon>
        <taxon>Burkholderiales</taxon>
        <taxon>Burkholderiaceae</taxon>
        <taxon>Paraburkholderia</taxon>
    </lineage>
</organism>
<evidence type="ECO:0000255" key="1">
    <source>
        <dbReference type="HAMAP-Rule" id="MF_01325"/>
    </source>
</evidence>
<evidence type="ECO:0000256" key="2">
    <source>
        <dbReference type="SAM" id="MobiDB-lite"/>
    </source>
</evidence>
<evidence type="ECO:0000305" key="3"/>
<dbReference type="EMBL" id="CP001043">
    <property type="protein sequence ID" value="ACC72012.1"/>
    <property type="molecule type" value="Genomic_DNA"/>
</dbReference>
<dbReference type="RefSeq" id="WP_012402196.1">
    <property type="nucleotide sequence ID" value="NC_010622.1"/>
</dbReference>
<dbReference type="SMR" id="B2JIG6"/>
<dbReference type="STRING" id="391038.Bphy_2840"/>
<dbReference type="KEGG" id="bph:Bphy_2840"/>
<dbReference type="eggNOG" id="COG0087">
    <property type="taxonomic scope" value="Bacteria"/>
</dbReference>
<dbReference type="HOGENOM" id="CLU_044142_4_1_4"/>
<dbReference type="OrthoDB" id="9806135at2"/>
<dbReference type="Proteomes" id="UP000001192">
    <property type="component" value="Chromosome 1"/>
</dbReference>
<dbReference type="GO" id="GO:0022625">
    <property type="term" value="C:cytosolic large ribosomal subunit"/>
    <property type="evidence" value="ECO:0007669"/>
    <property type="project" value="TreeGrafter"/>
</dbReference>
<dbReference type="GO" id="GO:0019843">
    <property type="term" value="F:rRNA binding"/>
    <property type="evidence" value="ECO:0007669"/>
    <property type="project" value="UniProtKB-UniRule"/>
</dbReference>
<dbReference type="GO" id="GO:0003735">
    <property type="term" value="F:structural constituent of ribosome"/>
    <property type="evidence" value="ECO:0007669"/>
    <property type="project" value="InterPro"/>
</dbReference>
<dbReference type="GO" id="GO:0006412">
    <property type="term" value="P:translation"/>
    <property type="evidence" value="ECO:0007669"/>
    <property type="project" value="UniProtKB-UniRule"/>
</dbReference>
<dbReference type="FunFam" id="2.40.30.10:FF:000004">
    <property type="entry name" value="50S ribosomal protein L3"/>
    <property type="match status" value="1"/>
</dbReference>
<dbReference type="FunFam" id="3.30.160.810:FF:000001">
    <property type="entry name" value="50S ribosomal protein L3"/>
    <property type="match status" value="1"/>
</dbReference>
<dbReference type="Gene3D" id="3.30.160.810">
    <property type="match status" value="1"/>
</dbReference>
<dbReference type="Gene3D" id="2.40.30.10">
    <property type="entry name" value="Translation factors"/>
    <property type="match status" value="1"/>
</dbReference>
<dbReference type="HAMAP" id="MF_01325_B">
    <property type="entry name" value="Ribosomal_uL3_B"/>
    <property type="match status" value="1"/>
</dbReference>
<dbReference type="InterPro" id="IPR000597">
    <property type="entry name" value="Ribosomal_uL3"/>
</dbReference>
<dbReference type="InterPro" id="IPR019927">
    <property type="entry name" value="Ribosomal_uL3_bac/org-type"/>
</dbReference>
<dbReference type="InterPro" id="IPR019926">
    <property type="entry name" value="Ribosomal_uL3_CS"/>
</dbReference>
<dbReference type="InterPro" id="IPR009000">
    <property type="entry name" value="Transl_B-barrel_sf"/>
</dbReference>
<dbReference type="NCBIfam" id="TIGR03625">
    <property type="entry name" value="L3_bact"/>
    <property type="match status" value="1"/>
</dbReference>
<dbReference type="PANTHER" id="PTHR11229">
    <property type="entry name" value="50S RIBOSOMAL PROTEIN L3"/>
    <property type="match status" value="1"/>
</dbReference>
<dbReference type="PANTHER" id="PTHR11229:SF16">
    <property type="entry name" value="LARGE RIBOSOMAL SUBUNIT PROTEIN UL3C"/>
    <property type="match status" value="1"/>
</dbReference>
<dbReference type="Pfam" id="PF00297">
    <property type="entry name" value="Ribosomal_L3"/>
    <property type="match status" value="1"/>
</dbReference>
<dbReference type="SUPFAM" id="SSF50447">
    <property type="entry name" value="Translation proteins"/>
    <property type="match status" value="1"/>
</dbReference>
<dbReference type="PROSITE" id="PS00474">
    <property type="entry name" value="RIBOSOMAL_L3"/>
    <property type="match status" value="1"/>
</dbReference>
<feature type="chain" id="PRO_1000141835" description="Large ribosomal subunit protein uL3">
    <location>
        <begin position="1"/>
        <end position="219"/>
    </location>
</feature>
<feature type="region of interest" description="Disordered" evidence="2">
    <location>
        <begin position="133"/>
        <end position="153"/>
    </location>
</feature>
<feature type="compositionally biased region" description="Polar residues" evidence="2">
    <location>
        <begin position="133"/>
        <end position="145"/>
    </location>
</feature>
<feature type="modified residue" description="N5-methylglutamine" evidence="1">
    <location>
        <position position="153"/>
    </location>
</feature>
<proteinExistence type="inferred from homology"/>